<accession>A7ZRW7</accession>
<dbReference type="EC" id="2.1.1.174" evidence="1"/>
<dbReference type="EMBL" id="CP000800">
    <property type="protein sequence ID" value="ABV18870.1"/>
    <property type="molecule type" value="Genomic_DNA"/>
</dbReference>
<dbReference type="RefSeq" id="WP_000018692.1">
    <property type="nucleotide sequence ID" value="NC_009801.1"/>
</dbReference>
<dbReference type="SMR" id="A7ZRW7"/>
<dbReference type="KEGG" id="ecw:EcE24377A_3551"/>
<dbReference type="HOGENOM" id="CLU_040288_4_0_6"/>
<dbReference type="Proteomes" id="UP000001122">
    <property type="component" value="Chromosome"/>
</dbReference>
<dbReference type="GO" id="GO:0005737">
    <property type="term" value="C:cytoplasm"/>
    <property type="evidence" value="ECO:0007669"/>
    <property type="project" value="UniProtKB-SubCell"/>
</dbReference>
<dbReference type="GO" id="GO:0052916">
    <property type="term" value="F:23S rRNA (guanine(1835)-N(2))-methyltransferase activity"/>
    <property type="evidence" value="ECO:0007669"/>
    <property type="project" value="UniProtKB-EC"/>
</dbReference>
<dbReference type="GO" id="GO:0003676">
    <property type="term" value="F:nucleic acid binding"/>
    <property type="evidence" value="ECO:0007669"/>
    <property type="project" value="InterPro"/>
</dbReference>
<dbReference type="CDD" id="cd02440">
    <property type="entry name" value="AdoMet_MTases"/>
    <property type="match status" value="1"/>
</dbReference>
<dbReference type="FunFam" id="3.40.50.150:FF:000046">
    <property type="entry name" value="Ribosomal RNA large subunit methyltransferase G"/>
    <property type="match status" value="1"/>
</dbReference>
<dbReference type="FunFam" id="3.40.50.150:FF:000047">
    <property type="entry name" value="Ribosomal RNA large subunit methyltransferase G"/>
    <property type="match status" value="1"/>
</dbReference>
<dbReference type="Gene3D" id="3.40.50.150">
    <property type="entry name" value="Vaccinia Virus protein VP39"/>
    <property type="match status" value="2"/>
</dbReference>
<dbReference type="HAMAP" id="MF_01859">
    <property type="entry name" value="23SrRNA_methyltr_G"/>
    <property type="match status" value="1"/>
</dbReference>
<dbReference type="InterPro" id="IPR002052">
    <property type="entry name" value="DNA_methylase_N6_adenine_CS"/>
</dbReference>
<dbReference type="InterPro" id="IPR017237">
    <property type="entry name" value="rRNA_m2G-MeTrfase_RlmG"/>
</dbReference>
<dbReference type="InterPro" id="IPR046977">
    <property type="entry name" value="RsmC/RlmG"/>
</dbReference>
<dbReference type="InterPro" id="IPR029063">
    <property type="entry name" value="SAM-dependent_MTases_sf"/>
</dbReference>
<dbReference type="InterPro" id="IPR007848">
    <property type="entry name" value="Small_mtfrase_dom"/>
</dbReference>
<dbReference type="NCBIfam" id="NF011577">
    <property type="entry name" value="PRK15001.1"/>
    <property type="match status" value="1"/>
</dbReference>
<dbReference type="PANTHER" id="PTHR47816:SF5">
    <property type="entry name" value="RIBOSOMAL RNA LARGE SUBUNIT METHYLTRANSFERASE G"/>
    <property type="match status" value="1"/>
</dbReference>
<dbReference type="PANTHER" id="PTHR47816">
    <property type="entry name" value="RIBOSOMAL RNA SMALL SUBUNIT METHYLTRANSFERASE C"/>
    <property type="match status" value="1"/>
</dbReference>
<dbReference type="Pfam" id="PF05175">
    <property type="entry name" value="MTS"/>
    <property type="match status" value="1"/>
</dbReference>
<dbReference type="PIRSF" id="PIRSF037565">
    <property type="entry name" value="RRNA_m2G_Mtase_RsmD_prd"/>
    <property type="match status" value="1"/>
</dbReference>
<dbReference type="SUPFAM" id="SSF53335">
    <property type="entry name" value="S-adenosyl-L-methionine-dependent methyltransferases"/>
    <property type="match status" value="1"/>
</dbReference>
<gene>
    <name evidence="1" type="primary">rlmG</name>
    <name type="ordered locus">EcE24377A_3551</name>
</gene>
<name>RLMG_ECO24</name>
<sequence length="378" mass="42348">MSHLDNGFRSLTLQRFPATDDVNPLQAWEAADEYLLQQLDDTEIRGPVLILNDAFGALSCALAEHKPYSIGDSYISELATRENLRLNGIDESSVKFLDSTADYPQQPGVVLIKVPKTLALLEQQLRALRKVVTSDTRIIAGAKARDIHTSTLELFEKVLGPTTTTLAWKKARLINCTFNEPPLADAPQTVSWKLEGTDWTIHNHANVFSRTGLDIGARFFMQHLPENLEGEIVDLGCGNGVIGLTLLDKNPQAKVVFVDESPMAVASSRMNVETNMPEALDRCEFMINNALSGVKPFRFNAVLCNPPFHQQHALTDNVAWEMFHHARRCLKINGELYIVANRHLDYFHKLKKIFGNCTTIATNNKFVVLKTVKLGRRR</sequence>
<evidence type="ECO:0000255" key="1">
    <source>
        <dbReference type="HAMAP-Rule" id="MF_01859"/>
    </source>
</evidence>
<reference key="1">
    <citation type="journal article" date="2008" name="J. Bacteriol.">
        <title>The pangenome structure of Escherichia coli: comparative genomic analysis of E. coli commensal and pathogenic isolates.</title>
        <authorList>
            <person name="Rasko D.A."/>
            <person name="Rosovitz M.J."/>
            <person name="Myers G.S.A."/>
            <person name="Mongodin E.F."/>
            <person name="Fricke W.F."/>
            <person name="Gajer P."/>
            <person name="Crabtree J."/>
            <person name="Sebaihia M."/>
            <person name="Thomson N.R."/>
            <person name="Chaudhuri R."/>
            <person name="Henderson I.R."/>
            <person name="Sperandio V."/>
            <person name="Ravel J."/>
        </authorList>
    </citation>
    <scope>NUCLEOTIDE SEQUENCE [LARGE SCALE GENOMIC DNA]</scope>
    <source>
        <strain>E24377A / ETEC</strain>
    </source>
</reference>
<feature type="chain" id="PRO_0000366459" description="Ribosomal RNA large subunit methyltransferase G">
    <location>
        <begin position="1"/>
        <end position="378"/>
    </location>
</feature>
<proteinExistence type="inferred from homology"/>
<keyword id="KW-0963">Cytoplasm</keyword>
<keyword id="KW-0489">Methyltransferase</keyword>
<keyword id="KW-1185">Reference proteome</keyword>
<keyword id="KW-0698">rRNA processing</keyword>
<keyword id="KW-0949">S-adenosyl-L-methionine</keyword>
<keyword id="KW-0808">Transferase</keyword>
<protein>
    <recommendedName>
        <fullName evidence="1">Ribosomal RNA large subunit methyltransferase G</fullName>
        <ecNumber evidence="1">2.1.1.174</ecNumber>
    </recommendedName>
    <alternativeName>
        <fullName evidence="1">23S rRNA m2G1835 methyltransferase</fullName>
    </alternativeName>
    <alternativeName>
        <fullName evidence="1">rRNA (guanine-N(2)-)-methyltransferase RlmG</fullName>
    </alternativeName>
</protein>
<comment type="function">
    <text evidence="1">Specifically methylates the guanine in position 1835 (m2G1835) of 23S rRNA.</text>
</comment>
<comment type="catalytic activity">
    <reaction evidence="1">
        <text>guanosine(1835) in 23S rRNA + S-adenosyl-L-methionine = N(2)-methylguanosine(1835) in 23S rRNA + S-adenosyl-L-homocysteine + H(+)</text>
        <dbReference type="Rhea" id="RHEA:42744"/>
        <dbReference type="Rhea" id="RHEA-COMP:10217"/>
        <dbReference type="Rhea" id="RHEA-COMP:10218"/>
        <dbReference type="ChEBI" id="CHEBI:15378"/>
        <dbReference type="ChEBI" id="CHEBI:57856"/>
        <dbReference type="ChEBI" id="CHEBI:59789"/>
        <dbReference type="ChEBI" id="CHEBI:74269"/>
        <dbReference type="ChEBI" id="CHEBI:74481"/>
        <dbReference type="EC" id="2.1.1.174"/>
    </reaction>
</comment>
<comment type="subcellular location">
    <subcellularLocation>
        <location evidence="1">Cytoplasm</location>
    </subcellularLocation>
</comment>
<comment type="similarity">
    <text evidence="1">Belongs to the methyltransferase superfamily. RlmG family.</text>
</comment>
<organism>
    <name type="scientific">Escherichia coli O139:H28 (strain E24377A / ETEC)</name>
    <dbReference type="NCBI Taxonomy" id="331111"/>
    <lineage>
        <taxon>Bacteria</taxon>
        <taxon>Pseudomonadati</taxon>
        <taxon>Pseudomonadota</taxon>
        <taxon>Gammaproteobacteria</taxon>
        <taxon>Enterobacterales</taxon>
        <taxon>Enterobacteriaceae</taxon>
        <taxon>Escherichia</taxon>
    </lineage>
</organism>